<name>TRI49_HUMAN</name>
<accession>P0CI25</accession>
<accession>A0AVR7</accession>
<accession>A0AVR9</accession>
<accession>Q6DJV1</accession>
<accession>Q9NS80</accession>
<dbReference type="EMBL" id="AB037682">
    <property type="protein sequence ID" value="BAB03503.1"/>
    <property type="molecule type" value="mRNA"/>
</dbReference>
<dbReference type="EMBL" id="AP004607">
    <property type="status" value="NOT_ANNOTATED_CDS"/>
    <property type="molecule type" value="Genomic_DNA"/>
</dbReference>
<dbReference type="EMBL" id="BC075019">
    <property type="protein sequence ID" value="AAH75019.1"/>
    <property type="molecule type" value="mRNA"/>
</dbReference>
<dbReference type="EMBL" id="BC075020">
    <property type="protein sequence ID" value="AAH75020.1"/>
    <property type="molecule type" value="mRNA"/>
</dbReference>
<dbReference type="EMBL" id="BC126472">
    <property type="protein sequence ID" value="AAI26473.1"/>
    <property type="molecule type" value="mRNA"/>
</dbReference>
<dbReference type="CCDS" id="CCDS8287.1"/>
<dbReference type="RefSeq" id="NP_065091.1">
    <property type="nucleotide sequence ID" value="NM_020358.2"/>
</dbReference>
<dbReference type="SMR" id="P0CI25"/>
<dbReference type="BioGRID" id="121361">
    <property type="interactions" value="36"/>
</dbReference>
<dbReference type="FunCoup" id="P0CI25">
    <property type="interactions" value="58"/>
</dbReference>
<dbReference type="IntAct" id="P0CI25">
    <property type="interactions" value="7"/>
</dbReference>
<dbReference type="STRING" id="9606.ENSP00000327604"/>
<dbReference type="iPTMnet" id="P0CI25"/>
<dbReference type="PhosphoSitePlus" id="P0CI25"/>
<dbReference type="BioMuta" id="TRIM49"/>
<dbReference type="DMDM" id="310947307"/>
<dbReference type="MassIVE" id="P0CI25"/>
<dbReference type="PaxDb" id="9606-ENSP00000327604"/>
<dbReference type="PeptideAtlas" id="P0CI25"/>
<dbReference type="Antibodypedia" id="31517">
    <property type="antibodies" value="157 antibodies from 18 providers"/>
</dbReference>
<dbReference type="DNASU" id="57093"/>
<dbReference type="Ensembl" id="ENST00000329758.5">
    <property type="protein sequence ID" value="ENSP00000327604.1"/>
    <property type="gene ID" value="ENSG00000168930.13"/>
</dbReference>
<dbReference type="GeneID" id="57093"/>
<dbReference type="KEGG" id="hsa:57093"/>
<dbReference type="MANE-Select" id="ENST00000329758.5">
    <property type="protein sequence ID" value="ENSP00000327604.1"/>
    <property type="RefSeq nucleotide sequence ID" value="NM_020358.2"/>
    <property type="RefSeq protein sequence ID" value="NP_065091.1"/>
</dbReference>
<dbReference type="UCSC" id="uc001pdb.3">
    <property type="organism name" value="human"/>
</dbReference>
<dbReference type="AGR" id="HGNC:13431"/>
<dbReference type="CTD" id="57093"/>
<dbReference type="GeneCards" id="TRIM49"/>
<dbReference type="HGNC" id="HGNC:13431">
    <property type="gene designation" value="TRIM49"/>
</dbReference>
<dbReference type="HPA" id="ENSG00000168930">
    <property type="expression patterns" value="Not detected"/>
</dbReference>
<dbReference type="MIM" id="606124">
    <property type="type" value="gene"/>
</dbReference>
<dbReference type="neXtProt" id="NX_P0CI25"/>
<dbReference type="OpenTargets" id="ENSG00000168930"/>
<dbReference type="VEuPathDB" id="HostDB:ENSG00000168930"/>
<dbReference type="eggNOG" id="KOG2177">
    <property type="taxonomic scope" value="Eukaryota"/>
</dbReference>
<dbReference type="GeneTree" id="ENSGT00940000165665"/>
<dbReference type="InParanoid" id="P0CI25"/>
<dbReference type="OMA" id="PEHATHE"/>
<dbReference type="OrthoDB" id="9511773at2759"/>
<dbReference type="PAN-GO" id="P0CI25">
    <property type="GO annotations" value="5 GO annotations based on evolutionary models"/>
</dbReference>
<dbReference type="PhylomeDB" id="P0CI25"/>
<dbReference type="TreeFam" id="TF338674"/>
<dbReference type="PathwayCommons" id="P0CI25"/>
<dbReference type="SignaLink" id="P0CI25"/>
<dbReference type="SIGNOR" id="P0CI25"/>
<dbReference type="BioGRID-ORCS" id="57093">
    <property type="hits" value="85 hits in 685 CRISPR screens"/>
</dbReference>
<dbReference type="GenomeRNAi" id="57093"/>
<dbReference type="Pharos" id="P0CI25">
    <property type="development level" value="Tdark"/>
</dbReference>
<dbReference type="PRO" id="PR:P0CI25"/>
<dbReference type="Proteomes" id="UP000005640">
    <property type="component" value="Chromosome 11"/>
</dbReference>
<dbReference type="RNAct" id="P0CI25">
    <property type="molecule type" value="protein"/>
</dbReference>
<dbReference type="Bgee" id="ENSG00000168930">
    <property type="expression patterns" value="Expressed in male germ line stem cell (sensu Vertebrata) in testis and 6 other cell types or tissues"/>
</dbReference>
<dbReference type="ExpressionAtlas" id="P0CI25">
    <property type="expression patterns" value="baseline and differential"/>
</dbReference>
<dbReference type="GO" id="GO:0005737">
    <property type="term" value="C:cytoplasm"/>
    <property type="evidence" value="ECO:0000318"/>
    <property type="project" value="GO_Central"/>
</dbReference>
<dbReference type="GO" id="GO:0019901">
    <property type="term" value="F:protein kinase binding"/>
    <property type="evidence" value="ECO:0000353"/>
    <property type="project" value="UniProtKB"/>
</dbReference>
<dbReference type="GO" id="GO:0061630">
    <property type="term" value="F:ubiquitin protein ligase activity"/>
    <property type="evidence" value="ECO:0000318"/>
    <property type="project" value="GO_Central"/>
</dbReference>
<dbReference type="GO" id="GO:0008270">
    <property type="term" value="F:zinc ion binding"/>
    <property type="evidence" value="ECO:0007669"/>
    <property type="project" value="UniProtKB-KW"/>
</dbReference>
<dbReference type="GO" id="GO:0045087">
    <property type="term" value="P:innate immune response"/>
    <property type="evidence" value="ECO:0000318"/>
    <property type="project" value="GO_Central"/>
</dbReference>
<dbReference type="GO" id="GO:0010468">
    <property type="term" value="P:regulation of gene expression"/>
    <property type="evidence" value="ECO:0000318"/>
    <property type="project" value="GO_Central"/>
</dbReference>
<dbReference type="CDD" id="cd19783">
    <property type="entry name" value="Bbox2_TRIM43-like"/>
    <property type="match status" value="1"/>
</dbReference>
<dbReference type="CDD" id="cd16603">
    <property type="entry name" value="RING-HC_TRIM43-like_C-IV"/>
    <property type="match status" value="1"/>
</dbReference>
<dbReference type="FunFam" id="3.30.160.60:FF:002572">
    <property type="entry name" value="Tripartite motif-containing protein 49"/>
    <property type="match status" value="1"/>
</dbReference>
<dbReference type="Gene3D" id="2.60.120.920">
    <property type="match status" value="1"/>
</dbReference>
<dbReference type="Gene3D" id="3.30.160.60">
    <property type="entry name" value="Classic Zinc Finger"/>
    <property type="match status" value="1"/>
</dbReference>
<dbReference type="Gene3D" id="3.30.40.10">
    <property type="entry name" value="Zinc/RING finger domain, C3HC4 (zinc finger)"/>
    <property type="match status" value="1"/>
</dbReference>
<dbReference type="InterPro" id="IPR001870">
    <property type="entry name" value="B30.2/SPRY"/>
</dbReference>
<dbReference type="InterPro" id="IPR043136">
    <property type="entry name" value="B30.2/SPRY_sf"/>
</dbReference>
<dbReference type="InterPro" id="IPR003879">
    <property type="entry name" value="Butyrophylin_SPRY"/>
</dbReference>
<dbReference type="InterPro" id="IPR013320">
    <property type="entry name" value="ConA-like_dom_sf"/>
</dbReference>
<dbReference type="InterPro" id="IPR003877">
    <property type="entry name" value="SPRY_dom"/>
</dbReference>
<dbReference type="InterPro" id="IPR050143">
    <property type="entry name" value="TRIM/RBCC"/>
</dbReference>
<dbReference type="InterPro" id="IPR000315">
    <property type="entry name" value="Znf_B-box"/>
</dbReference>
<dbReference type="InterPro" id="IPR001841">
    <property type="entry name" value="Znf_RING"/>
</dbReference>
<dbReference type="InterPro" id="IPR013083">
    <property type="entry name" value="Znf_RING/FYVE/PHD"/>
</dbReference>
<dbReference type="PANTHER" id="PTHR24103">
    <property type="entry name" value="E3 UBIQUITIN-PROTEIN LIGASE TRIM"/>
    <property type="match status" value="1"/>
</dbReference>
<dbReference type="Pfam" id="PF00622">
    <property type="entry name" value="SPRY"/>
    <property type="match status" value="1"/>
</dbReference>
<dbReference type="Pfam" id="PF00643">
    <property type="entry name" value="zf-B_box"/>
    <property type="match status" value="1"/>
</dbReference>
<dbReference type="Pfam" id="PF15227">
    <property type="entry name" value="zf-C3HC4_4"/>
    <property type="match status" value="1"/>
</dbReference>
<dbReference type="PRINTS" id="PR01407">
    <property type="entry name" value="BUTYPHLNCDUF"/>
</dbReference>
<dbReference type="SMART" id="SM00336">
    <property type="entry name" value="BBOX"/>
    <property type="match status" value="1"/>
</dbReference>
<dbReference type="SMART" id="SM00184">
    <property type="entry name" value="RING"/>
    <property type="match status" value="1"/>
</dbReference>
<dbReference type="SMART" id="SM00449">
    <property type="entry name" value="SPRY"/>
    <property type="match status" value="1"/>
</dbReference>
<dbReference type="SUPFAM" id="SSF57845">
    <property type="entry name" value="B-box zinc-binding domain"/>
    <property type="match status" value="1"/>
</dbReference>
<dbReference type="SUPFAM" id="SSF49899">
    <property type="entry name" value="Concanavalin A-like lectins/glucanases"/>
    <property type="match status" value="1"/>
</dbReference>
<dbReference type="SUPFAM" id="SSF57850">
    <property type="entry name" value="RING/U-box"/>
    <property type="match status" value="1"/>
</dbReference>
<dbReference type="PROSITE" id="PS50188">
    <property type="entry name" value="B302_SPRY"/>
    <property type="match status" value="1"/>
</dbReference>
<dbReference type="PROSITE" id="PS50119">
    <property type="entry name" value="ZF_BBOX"/>
    <property type="match status" value="1"/>
</dbReference>
<dbReference type="PROSITE" id="PS50089">
    <property type="entry name" value="ZF_RING_2"/>
    <property type="match status" value="1"/>
</dbReference>
<keyword id="KW-0479">Metal-binding</keyword>
<keyword id="KW-1185">Reference proteome</keyword>
<keyword id="KW-0862">Zinc</keyword>
<keyword id="KW-0863">Zinc-finger</keyword>
<protein>
    <recommendedName>
        <fullName>Tripartite motif-containing protein 49</fullName>
    </recommendedName>
    <alternativeName>
        <fullName>RING finger protein 18</fullName>
    </alternativeName>
    <alternativeName>
        <fullName>Testis-specific RING-finger protein</fullName>
    </alternativeName>
</protein>
<proteinExistence type="evidence at protein level"/>
<gene>
    <name type="primary">TRIM49</name>
    <name type="synonym">RNF18</name>
</gene>
<organism>
    <name type="scientific">Homo sapiens</name>
    <name type="common">Human</name>
    <dbReference type="NCBI Taxonomy" id="9606"/>
    <lineage>
        <taxon>Eukaryota</taxon>
        <taxon>Metazoa</taxon>
        <taxon>Chordata</taxon>
        <taxon>Craniata</taxon>
        <taxon>Vertebrata</taxon>
        <taxon>Euteleostomi</taxon>
        <taxon>Mammalia</taxon>
        <taxon>Eutheria</taxon>
        <taxon>Euarchontoglires</taxon>
        <taxon>Primates</taxon>
        <taxon>Haplorrhini</taxon>
        <taxon>Catarrhini</taxon>
        <taxon>Hominidae</taxon>
        <taxon>Homo</taxon>
    </lineage>
</organism>
<comment type="interaction">
    <interactant intactId="EBI-6427421">
        <id>P0CI25</id>
    </interactant>
    <interactant intactId="EBI-456371">
        <id>P61024</id>
        <label>CKS1B</label>
    </interactant>
    <organismsDiffer>false</organismsDiffer>
    <experiments>5</experiments>
</comment>
<comment type="interaction">
    <interactant intactId="EBI-6427421">
        <id>P0CI25</id>
    </interactant>
    <interactant intactId="EBI-466029">
        <id>P42858</id>
        <label>HTT</label>
    </interactant>
    <organismsDiffer>false</organismsDiffer>
    <experiments>9</experiments>
</comment>
<comment type="interaction">
    <interactant intactId="EBI-6427421">
        <id>P0CI25</id>
    </interactant>
    <interactant intactId="EBI-724928">
        <id>Q9H8M7</id>
        <label>MINDY3</label>
    </interactant>
    <organismsDiffer>false</organismsDiffer>
    <experiments>7</experiments>
</comment>
<comment type="interaction">
    <interactant intactId="EBI-6427421">
        <id>P0CI25</id>
    </interactant>
    <interactant intactId="EBI-11956563">
        <id>Q96HA1-2</id>
        <label>POM121</label>
    </interactant>
    <organismsDiffer>false</organismsDiffer>
    <experiments>3</experiments>
</comment>
<comment type="tissue specificity">
    <text>Preferentially expressed in testis.</text>
</comment>
<comment type="similarity">
    <text evidence="4">Belongs to the TRIM/RBCC family.</text>
</comment>
<reference key="1">
    <citation type="journal article" date="2000" name="Biochim. Biophys. Acta">
        <title>Isolation of a cDNA for a novel human RING finger protein gene, RNF18, by the virtual transcribed sequence (VTS) approach.</title>
        <authorList>
            <person name="Yoshikawa T."/>
            <person name="Seki N."/>
            <person name="Azuma T."/>
            <person name="Masuho Y."/>
            <person name="Muramatsu M."/>
            <person name="Miyajima N."/>
            <person name="Saito T."/>
        </authorList>
    </citation>
    <scope>NUCLEOTIDE SEQUENCE [MRNA]</scope>
    <source>
        <tissue>Testis</tissue>
    </source>
</reference>
<reference key="2">
    <citation type="journal article" date="2006" name="Nature">
        <title>Human chromosome 11 DNA sequence and analysis including novel gene identification.</title>
        <authorList>
            <person name="Taylor T.D."/>
            <person name="Noguchi H."/>
            <person name="Totoki Y."/>
            <person name="Toyoda A."/>
            <person name="Kuroki Y."/>
            <person name="Dewar K."/>
            <person name="Lloyd C."/>
            <person name="Itoh T."/>
            <person name="Takeda T."/>
            <person name="Kim D.-W."/>
            <person name="She X."/>
            <person name="Barlow K.F."/>
            <person name="Bloom T."/>
            <person name="Bruford E."/>
            <person name="Chang J.L."/>
            <person name="Cuomo C.A."/>
            <person name="Eichler E."/>
            <person name="FitzGerald M.G."/>
            <person name="Jaffe D.B."/>
            <person name="LaButti K."/>
            <person name="Nicol R."/>
            <person name="Park H.-S."/>
            <person name="Seaman C."/>
            <person name="Sougnez C."/>
            <person name="Yang X."/>
            <person name="Zimmer A.R."/>
            <person name="Zody M.C."/>
            <person name="Birren B.W."/>
            <person name="Nusbaum C."/>
            <person name="Fujiyama A."/>
            <person name="Hattori M."/>
            <person name="Rogers J."/>
            <person name="Lander E.S."/>
            <person name="Sakaki Y."/>
        </authorList>
    </citation>
    <scope>NUCLEOTIDE SEQUENCE [LARGE SCALE GENOMIC DNA]</scope>
</reference>
<reference key="3">
    <citation type="journal article" date="2004" name="Genome Res.">
        <title>The status, quality, and expansion of the NIH full-length cDNA project: the Mammalian Gene Collection (MGC).</title>
        <authorList>
            <consortium name="The MGC Project Team"/>
        </authorList>
    </citation>
    <scope>NUCLEOTIDE SEQUENCE [LARGE SCALE MRNA]</scope>
</reference>
<sequence length="452" mass="52888">MNSGILQVFQGELICPLCMNYFIDPVTIDCGHSFCRPCFYLNWQDIPFLVQCSECTKSTEQINLKTNIHLKKMASLARKVSLWLFLSSEEQMCGTHRETKKIFCEVDRSLLCLLCSSSQEHRYHRHRPIEWAAEEHREKLLQKMQSLWEKACENHRNLNVETTRTRCWKDYVNLRLEAIRAEYQKMPAFHHEEEKHNLEMLKKKGKEIFHRLHLSKAKMAHRMEILRGMYEELNEMCHKPDVELLQAFGDILHRSESVLLHMPQPLNPELSAGPITGLRDRLNQFRVHITLHHEEANNDIFLYEILRSMCIGCDHQDVPYFTATPRSFLAWGVQTFTSGKYYWEVHVGDSWNWAFGVCNMYRKEKNQNEKIDGKAGLFLLGCVKNDIQCSLFTTSPLMLQYIPKPTSRVGLFLDCEAKTVSFVDVNQSSLIYTIPNCSFSPPLRPIFCCIHF</sequence>
<feature type="chain" id="PRO_0000056273" description="Tripartite motif-containing protein 49">
    <location>
        <begin position="1"/>
        <end position="452"/>
    </location>
</feature>
<feature type="domain" description="B30.2/SPRY" evidence="3">
    <location>
        <begin position="269"/>
        <end position="452"/>
    </location>
</feature>
<feature type="zinc finger region" description="RING-type" evidence="2">
    <location>
        <begin position="15"/>
        <end position="56"/>
    </location>
</feature>
<feature type="zinc finger region" description="B box-type" evidence="1">
    <location>
        <begin position="88"/>
        <end position="129"/>
    </location>
</feature>
<feature type="binding site" evidence="1">
    <location>
        <position position="93"/>
    </location>
    <ligand>
        <name>Zn(2+)</name>
        <dbReference type="ChEBI" id="CHEBI:29105"/>
    </ligand>
</feature>
<feature type="binding site" evidence="1">
    <location>
        <position position="96"/>
    </location>
    <ligand>
        <name>Zn(2+)</name>
        <dbReference type="ChEBI" id="CHEBI:29105"/>
    </ligand>
</feature>
<feature type="binding site" evidence="1">
    <location>
        <position position="115"/>
    </location>
    <ligand>
        <name>Zn(2+)</name>
        <dbReference type="ChEBI" id="CHEBI:29105"/>
    </ligand>
</feature>
<feature type="binding site" evidence="1">
    <location>
        <position position="121"/>
    </location>
    <ligand>
        <name>Zn(2+)</name>
        <dbReference type="ChEBI" id="CHEBI:29105"/>
    </ligand>
</feature>
<feature type="sequence variant" id="VAR_061824" description="In dbSNP:rs12417980.">
    <original>G</original>
    <variation>R</variation>
    <location>
        <position position="373"/>
    </location>
</feature>
<feature type="sequence conflict" description="In Ref. 3; AAH75019/AAH75020." evidence="4" ref="3">
    <original>N</original>
    <variation>S</variation>
    <location>
        <position position="298"/>
    </location>
</feature>
<evidence type="ECO:0000255" key="1">
    <source>
        <dbReference type="PROSITE-ProRule" id="PRU00024"/>
    </source>
</evidence>
<evidence type="ECO:0000255" key="2">
    <source>
        <dbReference type="PROSITE-ProRule" id="PRU00175"/>
    </source>
</evidence>
<evidence type="ECO:0000255" key="3">
    <source>
        <dbReference type="PROSITE-ProRule" id="PRU00548"/>
    </source>
</evidence>
<evidence type="ECO:0000305" key="4"/>